<evidence type="ECO:0000250" key="1"/>
<evidence type="ECO:0000255" key="2">
    <source>
        <dbReference type="PROSITE-ProRule" id="PRU00335"/>
    </source>
</evidence>
<organism>
    <name type="scientific">Mycobacterium tuberculosis (strain CDC 1551 / Oshkosh)</name>
    <dbReference type="NCBI Taxonomy" id="83331"/>
    <lineage>
        <taxon>Bacteria</taxon>
        <taxon>Bacillati</taxon>
        <taxon>Actinomycetota</taxon>
        <taxon>Actinomycetes</taxon>
        <taxon>Mycobacteriales</taxon>
        <taxon>Mycobacteriaceae</taxon>
        <taxon>Mycobacterium</taxon>
        <taxon>Mycobacterium tuberculosis complex</taxon>
    </lineage>
</organism>
<name>KSTR2_MYCTO</name>
<keyword id="KW-0238">DNA-binding</keyword>
<keyword id="KW-1185">Reference proteome</keyword>
<keyword id="KW-0678">Repressor</keyword>
<keyword id="KW-0804">Transcription</keyword>
<keyword id="KW-0805">Transcription regulation</keyword>
<sequence length="200" mass="22906">MDRVAGQVNSRRGELLELAAAMFAERGLRATTVRDIADGAGILSGSLYHHFASKEEMVDELLRGFLDWLFARYRDIVDSTANPLERLQGLFMASFEAIEHHHAQVVIYQDEAQRLASQPRFSYIEDRNKQQRKMWVDVLNQGIEEGYFRPDLDVDLVYRFIRDTTWVSVRWYRPGGPLTAQQVGQQYLAIVLGGITKEGV</sequence>
<feature type="chain" id="PRO_0000427331" description="HTH-type transcriptional repressor KstR2">
    <location>
        <begin position="1"/>
        <end position="200"/>
    </location>
</feature>
<feature type="domain" description="HTH tetR-type" evidence="2">
    <location>
        <begin position="9"/>
        <end position="69"/>
    </location>
</feature>
<feature type="DNA-binding region" description="H-T-H motif" evidence="2">
    <location>
        <begin position="32"/>
        <end position="51"/>
    </location>
</feature>
<comment type="function">
    <text evidence="1">Controls the expression of a small regulon that may play a role in the utilization of cholesterol.</text>
</comment>
<comment type="subunit">
    <text evidence="1">Homodimer.</text>
</comment>
<accession>P9WMB8</accession>
<accession>L0TD56</accession>
<accession>P96839</accession>
<accession>Q7D5A5</accession>
<dbReference type="EMBL" id="AE000516">
    <property type="protein sequence ID" value="AAK48020.1"/>
    <property type="molecule type" value="Genomic_DNA"/>
</dbReference>
<dbReference type="PIR" id="C70604">
    <property type="entry name" value="C70604"/>
</dbReference>
<dbReference type="RefSeq" id="WP_003419329.1">
    <property type="nucleotide sequence ID" value="NZ_KK341227.1"/>
</dbReference>
<dbReference type="SMR" id="P9WMB8"/>
<dbReference type="GeneID" id="45427541"/>
<dbReference type="KEGG" id="mtc:MT3661"/>
<dbReference type="PATRIC" id="fig|83331.31.peg.3942"/>
<dbReference type="HOGENOM" id="CLU_069356_12_4_11"/>
<dbReference type="Proteomes" id="UP000001020">
    <property type="component" value="Chromosome"/>
</dbReference>
<dbReference type="GO" id="GO:0003700">
    <property type="term" value="F:DNA-binding transcription factor activity"/>
    <property type="evidence" value="ECO:0007669"/>
    <property type="project" value="TreeGrafter"/>
</dbReference>
<dbReference type="GO" id="GO:0000976">
    <property type="term" value="F:transcription cis-regulatory region binding"/>
    <property type="evidence" value="ECO:0007669"/>
    <property type="project" value="TreeGrafter"/>
</dbReference>
<dbReference type="FunFam" id="1.10.10.60:FF:000289">
    <property type="entry name" value="TetR family transcriptional regulator"/>
    <property type="match status" value="1"/>
</dbReference>
<dbReference type="FunFam" id="1.10.357.10:FF:000020">
    <property type="entry name" value="TetR family transcriptional regulator"/>
    <property type="match status" value="1"/>
</dbReference>
<dbReference type="Gene3D" id="1.10.10.60">
    <property type="entry name" value="Homeodomain-like"/>
    <property type="match status" value="1"/>
</dbReference>
<dbReference type="Gene3D" id="1.10.357.10">
    <property type="entry name" value="Tetracycline Repressor, domain 2"/>
    <property type="match status" value="1"/>
</dbReference>
<dbReference type="InterPro" id="IPR009057">
    <property type="entry name" value="Homeodomain-like_sf"/>
</dbReference>
<dbReference type="InterPro" id="IPR050109">
    <property type="entry name" value="HTH-type_TetR-like_transc_reg"/>
</dbReference>
<dbReference type="InterPro" id="IPR001647">
    <property type="entry name" value="HTH_TetR"/>
</dbReference>
<dbReference type="InterPro" id="IPR041490">
    <property type="entry name" value="KstR2_TetR_C"/>
</dbReference>
<dbReference type="InterPro" id="IPR036271">
    <property type="entry name" value="Tet_transcr_reg_TetR-rel_C_sf"/>
</dbReference>
<dbReference type="PANTHER" id="PTHR30055">
    <property type="entry name" value="HTH-TYPE TRANSCRIPTIONAL REGULATOR RUTR"/>
    <property type="match status" value="1"/>
</dbReference>
<dbReference type="PANTHER" id="PTHR30055:SF175">
    <property type="entry name" value="HTH-TYPE TRANSCRIPTIONAL REPRESSOR KSTR2"/>
    <property type="match status" value="1"/>
</dbReference>
<dbReference type="Pfam" id="PF17932">
    <property type="entry name" value="TetR_C_24"/>
    <property type="match status" value="1"/>
</dbReference>
<dbReference type="Pfam" id="PF00440">
    <property type="entry name" value="TetR_N"/>
    <property type="match status" value="1"/>
</dbReference>
<dbReference type="PRINTS" id="PR00455">
    <property type="entry name" value="HTHTETR"/>
</dbReference>
<dbReference type="SUPFAM" id="SSF46689">
    <property type="entry name" value="Homeodomain-like"/>
    <property type="match status" value="1"/>
</dbReference>
<dbReference type="SUPFAM" id="SSF48498">
    <property type="entry name" value="Tetracyclin repressor-like, C-terminal domain"/>
    <property type="match status" value="1"/>
</dbReference>
<dbReference type="PROSITE" id="PS50977">
    <property type="entry name" value="HTH_TETR_2"/>
    <property type="match status" value="1"/>
</dbReference>
<proteinExistence type="inferred from homology"/>
<protein>
    <recommendedName>
        <fullName>HTH-type transcriptional repressor KstR2</fullName>
    </recommendedName>
</protein>
<reference key="1">
    <citation type="journal article" date="2002" name="J. Bacteriol.">
        <title>Whole-genome comparison of Mycobacterium tuberculosis clinical and laboratory strains.</title>
        <authorList>
            <person name="Fleischmann R.D."/>
            <person name="Alland D."/>
            <person name="Eisen J.A."/>
            <person name="Carpenter L."/>
            <person name="White O."/>
            <person name="Peterson J.D."/>
            <person name="DeBoy R.T."/>
            <person name="Dodson R.J."/>
            <person name="Gwinn M.L."/>
            <person name="Haft D.H."/>
            <person name="Hickey E.K."/>
            <person name="Kolonay J.F."/>
            <person name="Nelson W.C."/>
            <person name="Umayam L.A."/>
            <person name="Ermolaeva M.D."/>
            <person name="Salzberg S.L."/>
            <person name="Delcher A."/>
            <person name="Utterback T.R."/>
            <person name="Weidman J.F."/>
            <person name="Khouri H.M."/>
            <person name="Gill J."/>
            <person name="Mikula A."/>
            <person name="Bishai W."/>
            <person name="Jacobs W.R. Jr."/>
            <person name="Venter J.C."/>
            <person name="Fraser C.M."/>
        </authorList>
    </citation>
    <scope>NUCLEOTIDE SEQUENCE [LARGE SCALE GENOMIC DNA]</scope>
    <source>
        <strain>CDC 1551 / Oshkosh</strain>
    </source>
</reference>
<gene>
    <name type="primary">kstR2</name>
    <name type="ordered locus">MT3661</name>
</gene>